<comment type="function">
    <text evidence="1">Calmodulin mediates the control of a large number of enzymes, ion channels and other proteins by Ca(2+). Among the enzymes to be stimulated by the calmodulin-Ca(2+) complex are a number of protein kinases and phosphatases (By similarity).</text>
</comment>
<comment type="miscellaneous">
    <text>This protein has four functional calcium-binding sites.</text>
</comment>
<comment type="similarity">
    <text evidence="3">Belongs to the calmodulin family.</text>
</comment>
<keyword id="KW-0007">Acetylation</keyword>
<keyword id="KW-0106">Calcium</keyword>
<keyword id="KW-0479">Metal-binding</keyword>
<keyword id="KW-0677">Repeat</keyword>
<proteinExistence type="evidence at transcript level"/>
<name>CALM_PLEOS</name>
<feature type="initiator methionine" description="Removed" evidence="1">
    <location>
        <position position="1"/>
    </location>
</feature>
<feature type="chain" id="PRO_0000198325" description="Calmodulin">
    <location>
        <begin position="2"/>
        <end position="149"/>
    </location>
</feature>
<feature type="domain" description="EF-hand 1" evidence="2">
    <location>
        <begin position="8"/>
        <end position="43"/>
    </location>
</feature>
<feature type="domain" description="EF-hand 2" evidence="2">
    <location>
        <begin position="44"/>
        <end position="79"/>
    </location>
</feature>
<feature type="domain" description="EF-hand 3" evidence="2">
    <location>
        <begin position="81"/>
        <end position="116"/>
    </location>
</feature>
<feature type="domain" description="EF-hand 4" evidence="2">
    <location>
        <begin position="117"/>
        <end position="149"/>
    </location>
</feature>
<feature type="binding site" evidence="2">
    <location>
        <position position="21"/>
    </location>
    <ligand>
        <name>Ca(2+)</name>
        <dbReference type="ChEBI" id="CHEBI:29108"/>
        <label>1</label>
    </ligand>
</feature>
<feature type="binding site" evidence="2">
    <location>
        <position position="23"/>
    </location>
    <ligand>
        <name>Ca(2+)</name>
        <dbReference type="ChEBI" id="CHEBI:29108"/>
        <label>1</label>
    </ligand>
</feature>
<feature type="binding site" evidence="2">
    <location>
        <position position="25"/>
    </location>
    <ligand>
        <name>Ca(2+)</name>
        <dbReference type="ChEBI" id="CHEBI:29108"/>
        <label>1</label>
    </ligand>
</feature>
<feature type="binding site" evidence="2">
    <location>
        <position position="27"/>
    </location>
    <ligand>
        <name>Ca(2+)</name>
        <dbReference type="ChEBI" id="CHEBI:29108"/>
        <label>1</label>
    </ligand>
</feature>
<feature type="binding site" evidence="2">
    <location>
        <position position="32"/>
    </location>
    <ligand>
        <name>Ca(2+)</name>
        <dbReference type="ChEBI" id="CHEBI:29108"/>
        <label>1</label>
    </ligand>
</feature>
<feature type="binding site" evidence="2">
    <location>
        <position position="57"/>
    </location>
    <ligand>
        <name>Ca(2+)</name>
        <dbReference type="ChEBI" id="CHEBI:29108"/>
        <label>2</label>
    </ligand>
</feature>
<feature type="binding site" evidence="2">
    <location>
        <position position="59"/>
    </location>
    <ligand>
        <name>Ca(2+)</name>
        <dbReference type="ChEBI" id="CHEBI:29108"/>
        <label>2</label>
    </ligand>
</feature>
<feature type="binding site" evidence="2">
    <location>
        <position position="61"/>
    </location>
    <ligand>
        <name>Ca(2+)</name>
        <dbReference type="ChEBI" id="CHEBI:29108"/>
        <label>2</label>
    </ligand>
</feature>
<feature type="binding site" evidence="2">
    <location>
        <position position="63"/>
    </location>
    <ligand>
        <name>Ca(2+)</name>
        <dbReference type="ChEBI" id="CHEBI:29108"/>
        <label>2</label>
    </ligand>
</feature>
<feature type="binding site" evidence="2">
    <location>
        <position position="68"/>
    </location>
    <ligand>
        <name>Ca(2+)</name>
        <dbReference type="ChEBI" id="CHEBI:29108"/>
        <label>2</label>
    </ligand>
</feature>
<feature type="binding site" evidence="2">
    <location>
        <position position="94"/>
    </location>
    <ligand>
        <name>Ca(2+)</name>
        <dbReference type="ChEBI" id="CHEBI:29108"/>
        <label>3</label>
    </ligand>
</feature>
<feature type="binding site" evidence="2">
    <location>
        <position position="96"/>
    </location>
    <ligand>
        <name>Ca(2+)</name>
        <dbReference type="ChEBI" id="CHEBI:29108"/>
        <label>3</label>
    </ligand>
</feature>
<feature type="binding site" evidence="2">
    <location>
        <position position="98"/>
    </location>
    <ligand>
        <name>Ca(2+)</name>
        <dbReference type="ChEBI" id="CHEBI:29108"/>
        <label>3</label>
    </ligand>
</feature>
<feature type="binding site" evidence="2">
    <location>
        <position position="100"/>
    </location>
    <ligand>
        <name>Ca(2+)</name>
        <dbReference type="ChEBI" id="CHEBI:29108"/>
        <label>3</label>
    </ligand>
</feature>
<feature type="binding site" evidence="2">
    <location>
        <position position="105"/>
    </location>
    <ligand>
        <name>Ca(2+)</name>
        <dbReference type="ChEBI" id="CHEBI:29108"/>
        <label>3</label>
    </ligand>
</feature>
<feature type="binding site" evidence="2">
    <location>
        <position position="130"/>
    </location>
    <ligand>
        <name>Ca(2+)</name>
        <dbReference type="ChEBI" id="CHEBI:29108"/>
        <label>4</label>
    </ligand>
</feature>
<feature type="binding site" evidence="2">
    <location>
        <position position="132"/>
    </location>
    <ligand>
        <name>Ca(2+)</name>
        <dbReference type="ChEBI" id="CHEBI:29108"/>
        <label>4</label>
    </ligand>
</feature>
<feature type="binding site" evidence="2">
    <location>
        <position position="134"/>
    </location>
    <ligand>
        <name>Ca(2+)</name>
        <dbReference type="ChEBI" id="CHEBI:29108"/>
        <label>4</label>
    </ligand>
</feature>
<feature type="binding site" evidence="2">
    <location>
        <position position="136"/>
    </location>
    <ligand>
        <name>Ca(2+)</name>
        <dbReference type="ChEBI" id="CHEBI:29108"/>
        <label>4</label>
    </ligand>
</feature>
<feature type="binding site" evidence="2">
    <location>
        <position position="141"/>
    </location>
    <ligand>
        <name>Ca(2+)</name>
        <dbReference type="ChEBI" id="CHEBI:29108"/>
        <label>4</label>
    </ligand>
</feature>
<feature type="modified residue" description="N-acetylalanine" evidence="1">
    <location>
        <position position="2"/>
    </location>
</feature>
<evidence type="ECO:0000250" key="1"/>
<evidence type="ECO:0000255" key="2">
    <source>
        <dbReference type="PROSITE-ProRule" id="PRU00448"/>
    </source>
</evidence>
<evidence type="ECO:0000305" key="3"/>
<dbReference type="EMBL" id="U91642">
    <property type="protein sequence ID" value="AAD17455.1"/>
    <property type="molecule type" value="mRNA"/>
</dbReference>
<dbReference type="EMBL" id="U91643">
    <property type="protein sequence ID" value="AAD17456.1"/>
    <property type="molecule type" value="Genomic_DNA"/>
</dbReference>
<dbReference type="SMR" id="O94739"/>
<dbReference type="VEuPathDB" id="FungiDB:PC9H_002005"/>
<dbReference type="VEuPathDB" id="FungiDB:PLEOSDRAFT_1090792"/>
<dbReference type="GO" id="GO:0016460">
    <property type="term" value="C:myosin II complex"/>
    <property type="evidence" value="ECO:0007669"/>
    <property type="project" value="TreeGrafter"/>
</dbReference>
<dbReference type="GO" id="GO:0005509">
    <property type="term" value="F:calcium ion binding"/>
    <property type="evidence" value="ECO:0007669"/>
    <property type="project" value="InterPro"/>
</dbReference>
<dbReference type="CDD" id="cd00051">
    <property type="entry name" value="EFh"/>
    <property type="match status" value="2"/>
</dbReference>
<dbReference type="FunFam" id="1.10.238.10:FF:000034">
    <property type="entry name" value="Calmodulin"/>
    <property type="match status" value="1"/>
</dbReference>
<dbReference type="FunFam" id="1.10.238.10:FF:000006">
    <property type="entry name" value="Calmodulin 1"/>
    <property type="match status" value="1"/>
</dbReference>
<dbReference type="Gene3D" id="1.10.238.10">
    <property type="entry name" value="EF-hand"/>
    <property type="match status" value="3"/>
</dbReference>
<dbReference type="InterPro" id="IPR050230">
    <property type="entry name" value="CALM/Myosin/TropC-like"/>
</dbReference>
<dbReference type="InterPro" id="IPR011992">
    <property type="entry name" value="EF-hand-dom_pair"/>
</dbReference>
<dbReference type="InterPro" id="IPR018247">
    <property type="entry name" value="EF_Hand_1_Ca_BS"/>
</dbReference>
<dbReference type="InterPro" id="IPR002048">
    <property type="entry name" value="EF_hand_dom"/>
</dbReference>
<dbReference type="PANTHER" id="PTHR23048:SF0">
    <property type="entry name" value="CALMODULIN LIKE 3"/>
    <property type="match status" value="1"/>
</dbReference>
<dbReference type="PANTHER" id="PTHR23048">
    <property type="entry name" value="MYOSIN LIGHT CHAIN 1, 3"/>
    <property type="match status" value="1"/>
</dbReference>
<dbReference type="Pfam" id="PF13499">
    <property type="entry name" value="EF-hand_7"/>
    <property type="match status" value="2"/>
</dbReference>
<dbReference type="SMART" id="SM00054">
    <property type="entry name" value="EFh"/>
    <property type="match status" value="4"/>
</dbReference>
<dbReference type="SUPFAM" id="SSF47473">
    <property type="entry name" value="EF-hand"/>
    <property type="match status" value="1"/>
</dbReference>
<dbReference type="PROSITE" id="PS00018">
    <property type="entry name" value="EF_HAND_1"/>
    <property type="match status" value="4"/>
</dbReference>
<dbReference type="PROSITE" id="PS50222">
    <property type="entry name" value="EF_HAND_2"/>
    <property type="match status" value="4"/>
</dbReference>
<gene>
    <name type="primary">CMD1</name>
</gene>
<accession>O94739</accession>
<sequence length="149" mass="16825">MADQLSEEQISEFKEAFSLFDKDGDGTITTKELGTVMRSLGQNPTEAELQDMINEVDADGNGTIDFPEFLTMMARKMRDTDSEEEIKEAFKVFDKDGNGYISAAELRHVMTNLGEKLTDNEVDEMIREADVDGDGQINYEEFVKMMLSK</sequence>
<reference key="1">
    <citation type="submission" date="1997-03" db="EMBL/GenBank/DDBJ databases">
        <title>Structure and sequence of the calmodulin gene from Pleurotus ostreatus.</title>
        <authorList>
            <person name="Park I."/>
            <person name="Yim J."/>
        </authorList>
    </citation>
    <scope>NUCLEOTIDE SEQUENCE [GENOMIC DNA / MRNA]</scope>
</reference>
<organism>
    <name type="scientific">Pleurotus ostreatus</name>
    <name type="common">Oyster mushroom</name>
    <name type="synonym">White-rot fungus</name>
    <dbReference type="NCBI Taxonomy" id="5322"/>
    <lineage>
        <taxon>Eukaryota</taxon>
        <taxon>Fungi</taxon>
        <taxon>Dikarya</taxon>
        <taxon>Basidiomycota</taxon>
        <taxon>Agaricomycotina</taxon>
        <taxon>Agaricomycetes</taxon>
        <taxon>Agaricomycetidae</taxon>
        <taxon>Agaricales</taxon>
        <taxon>Pleurotineae</taxon>
        <taxon>Pleurotaceae</taxon>
        <taxon>Pleurotus</taxon>
    </lineage>
</organism>
<protein>
    <recommendedName>
        <fullName>Calmodulin</fullName>
        <shortName>CaM</shortName>
    </recommendedName>
</protein>